<accession>Q9X9F6</accession>
<accession>Q669Z7</accession>
<gene>
    <name type="primary">ihfA</name>
    <name type="synonym">hid</name>
    <name type="synonym">himA</name>
    <name type="ordered locus">YPTB2335</name>
</gene>
<feature type="chain" id="PRO_0000105038" description="Integration host factor subunit alpha">
    <location>
        <begin position="1"/>
        <end position="98"/>
    </location>
</feature>
<feature type="region of interest" description="Disordered" evidence="2">
    <location>
        <begin position="49"/>
        <end position="70"/>
    </location>
</feature>
<feature type="sequence conflict" description="In Ref. 1; CAB46606." evidence="3" ref="1">
    <original>KRDAKD</original>
    <variation>NEMLKI</variation>
    <location>
        <begin position="20"/>
        <end position="25"/>
    </location>
</feature>
<keyword id="KW-0233">DNA recombination</keyword>
<keyword id="KW-0238">DNA-binding</keyword>
<keyword id="KW-0804">Transcription</keyword>
<keyword id="KW-0805">Transcription regulation</keyword>
<keyword id="KW-0810">Translation regulation</keyword>
<protein>
    <recommendedName>
        <fullName>Integration host factor subunit alpha</fullName>
        <shortName>IHF-alpha</shortName>
    </recommendedName>
</protein>
<dbReference type="EMBL" id="AJ238013">
    <property type="protein sequence ID" value="CAB46606.1"/>
    <property type="molecule type" value="Genomic_DNA"/>
</dbReference>
<dbReference type="EMBL" id="BX936398">
    <property type="protein sequence ID" value="CAH21573.1"/>
    <property type="molecule type" value="Genomic_DNA"/>
</dbReference>
<dbReference type="RefSeq" id="WP_002211830.1">
    <property type="nucleotide sequence ID" value="NZ_CP009712.1"/>
</dbReference>
<dbReference type="SMR" id="Q9X9F6"/>
<dbReference type="GeneID" id="97456078"/>
<dbReference type="KEGG" id="ypo:BZ17_119"/>
<dbReference type="KEGG" id="yps:YPTB2335"/>
<dbReference type="PATRIC" id="fig|273123.14.peg.128"/>
<dbReference type="Proteomes" id="UP000001011">
    <property type="component" value="Chromosome"/>
</dbReference>
<dbReference type="GO" id="GO:0005829">
    <property type="term" value="C:cytosol"/>
    <property type="evidence" value="ECO:0007669"/>
    <property type="project" value="TreeGrafter"/>
</dbReference>
<dbReference type="GO" id="GO:0003677">
    <property type="term" value="F:DNA binding"/>
    <property type="evidence" value="ECO:0007669"/>
    <property type="project" value="UniProtKB-UniRule"/>
</dbReference>
<dbReference type="GO" id="GO:0030527">
    <property type="term" value="F:structural constituent of chromatin"/>
    <property type="evidence" value="ECO:0007669"/>
    <property type="project" value="InterPro"/>
</dbReference>
<dbReference type="GO" id="GO:0006310">
    <property type="term" value="P:DNA recombination"/>
    <property type="evidence" value="ECO:0007669"/>
    <property type="project" value="UniProtKB-UniRule"/>
</dbReference>
<dbReference type="GO" id="GO:0009893">
    <property type="term" value="P:positive regulation of metabolic process"/>
    <property type="evidence" value="ECO:0007669"/>
    <property type="project" value="UniProtKB-ARBA"/>
</dbReference>
<dbReference type="GO" id="GO:0006355">
    <property type="term" value="P:regulation of DNA-templated transcription"/>
    <property type="evidence" value="ECO:0007669"/>
    <property type="project" value="UniProtKB-UniRule"/>
</dbReference>
<dbReference type="GO" id="GO:0006417">
    <property type="term" value="P:regulation of translation"/>
    <property type="evidence" value="ECO:0007669"/>
    <property type="project" value="UniProtKB-UniRule"/>
</dbReference>
<dbReference type="CDD" id="cd13835">
    <property type="entry name" value="IHF_A"/>
    <property type="match status" value="1"/>
</dbReference>
<dbReference type="FunFam" id="4.10.520.10:FF:000002">
    <property type="entry name" value="Integration host factor subunit alpha"/>
    <property type="match status" value="1"/>
</dbReference>
<dbReference type="Gene3D" id="4.10.520.10">
    <property type="entry name" value="IHF-like DNA-binding proteins"/>
    <property type="match status" value="1"/>
</dbReference>
<dbReference type="HAMAP" id="MF_00380">
    <property type="entry name" value="IHF_alpha"/>
    <property type="match status" value="1"/>
</dbReference>
<dbReference type="InterPro" id="IPR000119">
    <property type="entry name" value="Hist_DNA-bd"/>
</dbReference>
<dbReference type="InterPro" id="IPR020816">
    <property type="entry name" value="Histone-like_DNA-bd_CS"/>
</dbReference>
<dbReference type="InterPro" id="IPR010992">
    <property type="entry name" value="IHF-like_DNA-bd_dom_sf"/>
</dbReference>
<dbReference type="InterPro" id="IPR005684">
    <property type="entry name" value="IHF_alpha"/>
</dbReference>
<dbReference type="NCBIfam" id="TIGR00987">
    <property type="entry name" value="himA"/>
    <property type="match status" value="1"/>
</dbReference>
<dbReference type="NCBIfam" id="NF001401">
    <property type="entry name" value="PRK00285.1"/>
    <property type="match status" value="1"/>
</dbReference>
<dbReference type="PANTHER" id="PTHR33175">
    <property type="entry name" value="DNA-BINDING PROTEIN HU"/>
    <property type="match status" value="1"/>
</dbReference>
<dbReference type="PANTHER" id="PTHR33175:SF2">
    <property type="entry name" value="INTEGRATION HOST FACTOR SUBUNIT ALPHA"/>
    <property type="match status" value="1"/>
</dbReference>
<dbReference type="Pfam" id="PF00216">
    <property type="entry name" value="Bac_DNA_binding"/>
    <property type="match status" value="1"/>
</dbReference>
<dbReference type="PRINTS" id="PR01727">
    <property type="entry name" value="DNABINDINGHU"/>
</dbReference>
<dbReference type="SMART" id="SM00411">
    <property type="entry name" value="BHL"/>
    <property type="match status" value="1"/>
</dbReference>
<dbReference type="SUPFAM" id="SSF47729">
    <property type="entry name" value="IHF-like DNA-binding proteins"/>
    <property type="match status" value="1"/>
</dbReference>
<dbReference type="PROSITE" id="PS00045">
    <property type="entry name" value="HISTONE_LIKE"/>
    <property type="match status" value="1"/>
</dbReference>
<name>IHFA_YERPS</name>
<sequence length="98" mass="11186">MALTKAEMSEHLFEKLGLSKRDAKDLVELFFEEVRRALENGEQVKLSGFGNFDLRDKNQRPGRNPKTGEDIPITARRVVTFRPGQKLKSRVESATPKE</sequence>
<reference key="1">
    <citation type="submission" date="1999-04" db="EMBL/GenBank/DDBJ databases">
        <title>Characterization of IS1541-like elements in Yersinia enterocolitica and Yersinia pseudotuberculosis.</title>
        <authorList>
            <person name="Simonet M."/>
            <person name="Devalckenaere A."/>
            <person name="Odaert M."/>
            <person name="Trieu-Cuot P."/>
        </authorList>
    </citation>
    <scope>NUCLEOTIDE SEQUENCE [GENOMIC DNA]</scope>
</reference>
<reference key="2">
    <citation type="journal article" date="2004" name="Proc. Natl. Acad. Sci. U.S.A.">
        <title>Insights into the evolution of Yersinia pestis through whole-genome comparison with Yersinia pseudotuberculosis.</title>
        <authorList>
            <person name="Chain P.S.G."/>
            <person name="Carniel E."/>
            <person name="Larimer F.W."/>
            <person name="Lamerdin J."/>
            <person name="Stoutland P.O."/>
            <person name="Regala W.M."/>
            <person name="Georgescu A.M."/>
            <person name="Vergez L.M."/>
            <person name="Land M.L."/>
            <person name="Motin V.L."/>
            <person name="Brubaker R.R."/>
            <person name="Fowler J."/>
            <person name="Hinnebusch J."/>
            <person name="Marceau M."/>
            <person name="Medigue C."/>
            <person name="Simonet M."/>
            <person name="Chenal-Francisque V."/>
            <person name="Souza B."/>
            <person name="Dacheux D."/>
            <person name="Elliott J.M."/>
            <person name="Derbise A."/>
            <person name="Hauser L.J."/>
            <person name="Garcia E."/>
        </authorList>
    </citation>
    <scope>NUCLEOTIDE SEQUENCE [LARGE SCALE GENOMIC DNA]</scope>
    <source>
        <strain>IP32953</strain>
    </source>
</reference>
<comment type="function">
    <text evidence="1">This protein is one of the two subunits of integration host factor, a specific DNA-binding protein that functions in genetic recombination as well as in transcriptional and translational control.</text>
</comment>
<comment type="subunit">
    <text>Heterodimer of an alpha and a beta chain.</text>
</comment>
<comment type="similarity">
    <text evidence="3">Belongs to the bacterial histone-like protein family.</text>
</comment>
<evidence type="ECO:0000250" key="1"/>
<evidence type="ECO:0000256" key="2">
    <source>
        <dbReference type="SAM" id="MobiDB-lite"/>
    </source>
</evidence>
<evidence type="ECO:0000305" key="3"/>
<organism>
    <name type="scientific">Yersinia pseudotuberculosis serotype I (strain IP32953)</name>
    <dbReference type="NCBI Taxonomy" id="273123"/>
    <lineage>
        <taxon>Bacteria</taxon>
        <taxon>Pseudomonadati</taxon>
        <taxon>Pseudomonadota</taxon>
        <taxon>Gammaproteobacteria</taxon>
        <taxon>Enterobacterales</taxon>
        <taxon>Yersiniaceae</taxon>
        <taxon>Yersinia</taxon>
    </lineage>
</organism>
<proteinExistence type="inferred from homology"/>